<name>SYR_BORAP</name>
<organism>
    <name type="scientific">Borreliella afzelii (strain PKo)</name>
    <name type="common">Borrelia afzelii</name>
    <dbReference type="NCBI Taxonomy" id="390236"/>
    <lineage>
        <taxon>Bacteria</taxon>
        <taxon>Pseudomonadati</taxon>
        <taxon>Spirochaetota</taxon>
        <taxon>Spirochaetia</taxon>
        <taxon>Spirochaetales</taxon>
        <taxon>Borreliaceae</taxon>
        <taxon>Borreliella</taxon>
    </lineage>
</organism>
<sequence>MTKNVKKNIKDEINIIVTNLALSKNIKLDEININIQKPPKSDLGDISILIFELSKTLKLPIETISEEIIKALKAKYEIKAMGPYLNIKIPRKEYIHNTIQMVNAQKDTYGTSKYLDNKKIILEFSSPNTNKPLHVGHLRNDVIGESLSRILKAVGAKIIKLNLINDRGVHICKSMLAYKKFGNEITPEKAFKKGDHFIGDFYVQYNKYAQENENAEEEIQDLLLKWEQKDASTIELWKKLNNWAIEGIKETYKITNTSFDKIYLESEIFEIGKNVVLEGLEKGFCYKREDGAICIDLPLDSDEKTDTKVKQKVLIRSNGTSIYLTQDLGNIAVRIKEFNFEEMIYVVGSEQIQHFKNLFFVSEKLGISKNKKLFHLSHGMVNLVDGKMKSREGNVIDGDNLILDLMESILPEITQKIENKENAKKNALDIALGAIHYYLLKSAIHKDIVFNKKESLSFTGNSGPYIQYVGARINSILEKYNTLSIPIIKKINFELLEHEKEWDIIKIISELEENIIKAAKDLNPSILTSYSYSLAKHFSAYYQEVRVIDINNIDLTAARIEFLKAILQTIKNCMYLLNIPYMLKM</sequence>
<accession>Q0SMR4</accession>
<accession>G0IQE4</accession>
<feature type="chain" id="PRO_1000017992" description="Arginine--tRNA ligase">
    <location>
        <begin position="1"/>
        <end position="585"/>
    </location>
</feature>
<feature type="short sequence motif" description="'HIGH' region">
    <location>
        <begin position="127"/>
        <end position="137"/>
    </location>
</feature>
<proteinExistence type="inferred from homology"/>
<comment type="catalytic activity">
    <reaction evidence="1">
        <text>tRNA(Arg) + L-arginine + ATP = L-arginyl-tRNA(Arg) + AMP + diphosphate</text>
        <dbReference type="Rhea" id="RHEA:20301"/>
        <dbReference type="Rhea" id="RHEA-COMP:9658"/>
        <dbReference type="Rhea" id="RHEA-COMP:9673"/>
        <dbReference type="ChEBI" id="CHEBI:30616"/>
        <dbReference type="ChEBI" id="CHEBI:32682"/>
        <dbReference type="ChEBI" id="CHEBI:33019"/>
        <dbReference type="ChEBI" id="CHEBI:78442"/>
        <dbReference type="ChEBI" id="CHEBI:78513"/>
        <dbReference type="ChEBI" id="CHEBI:456215"/>
        <dbReference type="EC" id="6.1.1.19"/>
    </reaction>
</comment>
<comment type="subunit">
    <text evidence="1">Monomer.</text>
</comment>
<comment type="subcellular location">
    <subcellularLocation>
        <location evidence="1">Cytoplasm</location>
    </subcellularLocation>
</comment>
<comment type="similarity">
    <text evidence="1">Belongs to the class-I aminoacyl-tRNA synthetase family.</text>
</comment>
<dbReference type="EC" id="6.1.1.19" evidence="1"/>
<dbReference type="EMBL" id="CP000395">
    <property type="protein sequence ID" value="ABH01864.1"/>
    <property type="molecule type" value="Genomic_DNA"/>
</dbReference>
<dbReference type="EMBL" id="CP002933">
    <property type="protein sequence ID" value="AEL69814.1"/>
    <property type="molecule type" value="Genomic_DNA"/>
</dbReference>
<dbReference type="RefSeq" id="WP_004789483.1">
    <property type="nucleotide sequence ID" value="NZ_CP160066.1"/>
</dbReference>
<dbReference type="SMR" id="Q0SMR4"/>
<dbReference type="STRING" id="29518.BLA32_01295"/>
<dbReference type="KEGG" id="baf:BAPKO_0625"/>
<dbReference type="KEGG" id="bafz:BafPKo_0610"/>
<dbReference type="PATRIC" id="fig|390236.22.peg.587"/>
<dbReference type="eggNOG" id="COG0018">
    <property type="taxonomic scope" value="Bacteria"/>
</dbReference>
<dbReference type="HOGENOM" id="CLU_006406_6_1_12"/>
<dbReference type="OrthoDB" id="9805987at2"/>
<dbReference type="Proteomes" id="UP000005216">
    <property type="component" value="Chromosome"/>
</dbReference>
<dbReference type="GO" id="GO:0005737">
    <property type="term" value="C:cytoplasm"/>
    <property type="evidence" value="ECO:0007669"/>
    <property type="project" value="UniProtKB-SubCell"/>
</dbReference>
<dbReference type="GO" id="GO:0004814">
    <property type="term" value="F:arginine-tRNA ligase activity"/>
    <property type="evidence" value="ECO:0007669"/>
    <property type="project" value="UniProtKB-UniRule"/>
</dbReference>
<dbReference type="GO" id="GO:0005524">
    <property type="term" value="F:ATP binding"/>
    <property type="evidence" value="ECO:0007669"/>
    <property type="project" value="UniProtKB-UniRule"/>
</dbReference>
<dbReference type="GO" id="GO:0006420">
    <property type="term" value="P:arginyl-tRNA aminoacylation"/>
    <property type="evidence" value="ECO:0007669"/>
    <property type="project" value="UniProtKB-UniRule"/>
</dbReference>
<dbReference type="CDD" id="cd00671">
    <property type="entry name" value="ArgRS_core"/>
    <property type="match status" value="1"/>
</dbReference>
<dbReference type="FunFam" id="1.10.730.10:FF:000006">
    <property type="entry name" value="Arginyl-tRNA synthetase 2, mitochondrial"/>
    <property type="match status" value="1"/>
</dbReference>
<dbReference type="Gene3D" id="3.30.1360.70">
    <property type="entry name" value="Arginyl tRNA synthetase N-terminal domain"/>
    <property type="match status" value="1"/>
</dbReference>
<dbReference type="Gene3D" id="3.40.50.620">
    <property type="entry name" value="HUPs"/>
    <property type="match status" value="1"/>
</dbReference>
<dbReference type="Gene3D" id="1.10.730.10">
    <property type="entry name" value="Isoleucyl-tRNA Synthetase, Domain 1"/>
    <property type="match status" value="1"/>
</dbReference>
<dbReference type="HAMAP" id="MF_00123">
    <property type="entry name" value="Arg_tRNA_synth"/>
    <property type="match status" value="1"/>
</dbReference>
<dbReference type="InterPro" id="IPR001412">
    <property type="entry name" value="aa-tRNA-synth_I_CS"/>
</dbReference>
<dbReference type="InterPro" id="IPR001278">
    <property type="entry name" value="Arg-tRNA-ligase"/>
</dbReference>
<dbReference type="InterPro" id="IPR005148">
    <property type="entry name" value="Arg-tRNA-synth_N"/>
</dbReference>
<dbReference type="InterPro" id="IPR036695">
    <property type="entry name" value="Arg-tRNA-synth_N_sf"/>
</dbReference>
<dbReference type="InterPro" id="IPR035684">
    <property type="entry name" value="ArgRS_core"/>
</dbReference>
<dbReference type="InterPro" id="IPR008909">
    <property type="entry name" value="DALR_anticod-bd"/>
</dbReference>
<dbReference type="InterPro" id="IPR014729">
    <property type="entry name" value="Rossmann-like_a/b/a_fold"/>
</dbReference>
<dbReference type="InterPro" id="IPR009080">
    <property type="entry name" value="tRNAsynth_Ia_anticodon-bd"/>
</dbReference>
<dbReference type="NCBIfam" id="TIGR00456">
    <property type="entry name" value="argS"/>
    <property type="match status" value="1"/>
</dbReference>
<dbReference type="PANTHER" id="PTHR11956:SF5">
    <property type="entry name" value="ARGININE--TRNA LIGASE, CYTOPLASMIC"/>
    <property type="match status" value="1"/>
</dbReference>
<dbReference type="PANTHER" id="PTHR11956">
    <property type="entry name" value="ARGINYL-TRNA SYNTHETASE"/>
    <property type="match status" value="1"/>
</dbReference>
<dbReference type="Pfam" id="PF03485">
    <property type="entry name" value="Arg_tRNA_synt_N"/>
    <property type="match status" value="1"/>
</dbReference>
<dbReference type="Pfam" id="PF05746">
    <property type="entry name" value="DALR_1"/>
    <property type="match status" value="1"/>
</dbReference>
<dbReference type="Pfam" id="PF00750">
    <property type="entry name" value="tRNA-synt_1d"/>
    <property type="match status" value="1"/>
</dbReference>
<dbReference type="PRINTS" id="PR01038">
    <property type="entry name" value="TRNASYNTHARG"/>
</dbReference>
<dbReference type="SMART" id="SM01016">
    <property type="entry name" value="Arg_tRNA_synt_N"/>
    <property type="match status" value="1"/>
</dbReference>
<dbReference type="SMART" id="SM00836">
    <property type="entry name" value="DALR_1"/>
    <property type="match status" value="1"/>
</dbReference>
<dbReference type="SUPFAM" id="SSF47323">
    <property type="entry name" value="Anticodon-binding domain of a subclass of class I aminoacyl-tRNA synthetases"/>
    <property type="match status" value="1"/>
</dbReference>
<dbReference type="SUPFAM" id="SSF55190">
    <property type="entry name" value="Arginyl-tRNA synthetase (ArgRS), N-terminal 'additional' domain"/>
    <property type="match status" value="1"/>
</dbReference>
<dbReference type="SUPFAM" id="SSF52374">
    <property type="entry name" value="Nucleotidylyl transferase"/>
    <property type="match status" value="1"/>
</dbReference>
<dbReference type="PROSITE" id="PS00178">
    <property type="entry name" value="AA_TRNA_LIGASE_I"/>
    <property type="match status" value="1"/>
</dbReference>
<gene>
    <name evidence="1" type="primary">argS</name>
    <name type="ordered locus">BAPKO_0625</name>
    <name type="ordered locus">BafPKo_0610</name>
</gene>
<evidence type="ECO:0000255" key="1">
    <source>
        <dbReference type="HAMAP-Rule" id="MF_00123"/>
    </source>
</evidence>
<keyword id="KW-0030">Aminoacyl-tRNA synthetase</keyword>
<keyword id="KW-0067">ATP-binding</keyword>
<keyword id="KW-0963">Cytoplasm</keyword>
<keyword id="KW-0436">Ligase</keyword>
<keyword id="KW-0547">Nucleotide-binding</keyword>
<keyword id="KW-0648">Protein biosynthesis</keyword>
<protein>
    <recommendedName>
        <fullName evidence="1">Arginine--tRNA ligase</fullName>
        <ecNumber evidence="1">6.1.1.19</ecNumber>
    </recommendedName>
    <alternativeName>
        <fullName evidence="1">Arginyl-tRNA synthetase</fullName>
        <shortName evidence="1">ArgRS</shortName>
    </alternativeName>
</protein>
<reference key="1">
    <citation type="journal article" date="2006" name="BMC Genomics">
        <title>Comparative genome analysis: selection pressure on the Borrelia vls cassettes is essential for infectivity.</title>
        <authorList>
            <person name="Gloeckner G."/>
            <person name="Schulte-Spechtel U."/>
            <person name="Schilhabel M."/>
            <person name="Felder M."/>
            <person name="Suehnel J."/>
            <person name="Wilske B."/>
            <person name="Platzer M."/>
        </authorList>
    </citation>
    <scope>NUCLEOTIDE SEQUENCE [LARGE SCALE GENOMIC DNA]</scope>
    <source>
        <strain>PKo</strain>
    </source>
</reference>
<reference key="2">
    <citation type="journal article" date="2011" name="J. Bacteriol.">
        <title>Whole-genome sequences of two Borrelia afzelii and two Borrelia garinii Lyme disease agent isolates.</title>
        <authorList>
            <person name="Casjens S.R."/>
            <person name="Mongodin E.F."/>
            <person name="Qiu W.G."/>
            <person name="Dunn J.J."/>
            <person name="Luft B.J."/>
            <person name="Fraser-Liggett C.M."/>
            <person name="Schutzer S.E."/>
        </authorList>
    </citation>
    <scope>NUCLEOTIDE SEQUENCE [LARGE SCALE GENOMIC DNA]</scope>
    <source>
        <strain>PKo</strain>
    </source>
</reference>